<keyword id="KW-0687">Ribonucleoprotein</keyword>
<keyword id="KW-0689">Ribosomal protein</keyword>
<keyword id="KW-0694">RNA-binding</keyword>
<keyword id="KW-0699">rRNA-binding</keyword>
<evidence type="ECO:0000255" key="1">
    <source>
        <dbReference type="HAMAP-Rule" id="MF_01345"/>
    </source>
</evidence>
<evidence type="ECO:0000305" key="2"/>
<name>RS17_PARPJ</name>
<sequence>MNDSVKTSLKRTLVGKVVSNKMDKTVTVLVEHRVKHPIYGKYVVRSKKYHAHDDANTYNEGDLVEIQETRPISKTKAWVVARLVEAARVI</sequence>
<organism>
    <name type="scientific">Paraburkholderia phytofirmans (strain DSM 17436 / LMG 22146 / PsJN)</name>
    <name type="common">Burkholderia phytofirmans</name>
    <dbReference type="NCBI Taxonomy" id="398527"/>
    <lineage>
        <taxon>Bacteria</taxon>
        <taxon>Pseudomonadati</taxon>
        <taxon>Pseudomonadota</taxon>
        <taxon>Betaproteobacteria</taxon>
        <taxon>Burkholderiales</taxon>
        <taxon>Burkholderiaceae</taxon>
        <taxon>Paraburkholderia</taxon>
    </lineage>
</organism>
<proteinExistence type="inferred from homology"/>
<dbReference type="EMBL" id="CP001052">
    <property type="protein sequence ID" value="ACD18025.1"/>
    <property type="molecule type" value="Genomic_DNA"/>
</dbReference>
<dbReference type="RefSeq" id="WP_007180129.1">
    <property type="nucleotide sequence ID" value="NC_010681.1"/>
</dbReference>
<dbReference type="SMR" id="B2T742"/>
<dbReference type="STRING" id="398527.Bphyt_3635"/>
<dbReference type="GeneID" id="97311001"/>
<dbReference type="KEGG" id="bpy:Bphyt_3635"/>
<dbReference type="eggNOG" id="COG0186">
    <property type="taxonomic scope" value="Bacteria"/>
</dbReference>
<dbReference type="HOGENOM" id="CLU_073626_1_1_4"/>
<dbReference type="OrthoDB" id="9811714at2"/>
<dbReference type="Proteomes" id="UP000001739">
    <property type="component" value="Chromosome 1"/>
</dbReference>
<dbReference type="GO" id="GO:0022627">
    <property type="term" value="C:cytosolic small ribosomal subunit"/>
    <property type="evidence" value="ECO:0007669"/>
    <property type="project" value="TreeGrafter"/>
</dbReference>
<dbReference type="GO" id="GO:0019843">
    <property type="term" value="F:rRNA binding"/>
    <property type="evidence" value="ECO:0007669"/>
    <property type="project" value="UniProtKB-UniRule"/>
</dbReference>
<dbReference type="GO" id="GO:0003735">
    <property type="term" value="F:structural constituent of ribosome"/>
    <property type="evidence" value="ECO:0007669"/>
    <property type="project" value="InterPro"/>
</dbReference>
<dbReference type="GO" id="GO:0006412">
    <property type="term" value="P:translation"/>
    <property type="evidence" value="ECO:0007669"/>
    <property type="project" value="UniProtKB-UniRule"/>
</dbReference>
<dbReference type="CDD" id="cd00364">
    <property type="entry name" value="Ribosomal_uS17"/>
    <property type="match status" value="1"/>
</dbReference>
<dbReference type="Gene3D" id="2.40.50.140">
    <property type="entry name" value="Nucleic acid-binding proteins"/>
    <property type="match status" value="1"/>
</dbReference>
<dbReference type="HAMAP" id="MF_01345_B">
    <property type="entry name" value="Ribosomal_uS17_B"/>
    <property type="match status" value="1"/>
</dbReference>
<dbReference type="InterPro" id="IPR012340">
    <property type="entry name" value="NA-bd_OB-fold"/>
</dbReference>
<dbReference type="InterPro" id="IPR000266">
    <property type="entry name" value="Ribosomal_uS17"/>
</dbReference>
<dbReference type="InterPro" id="IPR019984">
    <property type="entry name" value="Ribosomal_uS17_bact/chlr"/>
</dbReference>
<dbReference type="InterPro" id="IPR019979">
    <property type="entry name" value="Ribosomal_uS17_CS"/>
</dbReference>
<dbReference type="NCBIfam" id="NF004123">
    <property type="entry name" value="PRK05610.1"/>
    <property type="match status" value="1"/>
</dbReference>
<dbReference type="NCBIfam" id="TIGR03635">
    <property type="entry name" value="uS17_bact"/>
    <property type="match status" value="1"/>
</dbReference>
<dbReference type="PANTHER" id="PTHR10744">
    <property type="entry name" value="40S RIBOSOMAL PROTEIN S11 FAMILY MEMBER"/>
    <property type="match status" value="1"/>
</dbReference>
<dbReference type="PANTHER" id="PTHR10744:SF1">
    <property type="entry name" value="SMALL RIBOSOMAL SUBUNIT PROTEIN US17M"/>
    <property type="match status" value="1"/>
</dbReference>
<dbReference type="Pfam" id="PF00366">
    <property type="entry name" value="Ribosomal_S17"/>
    <property type="match status" value="1"/>
</dbReference>
<dbReference type="PRINTS" id="PR00973">
    <property type="entry name" value="RIBOSOMALS17"/>
</dbReference>
<dbReference type="SUPFAM" id="SSF50249">
    <property type="entry name" value="Nucleic acid-binding proteins"/>
    <property type="match status" value="1"/>
</dbReference>
<dbReference type="PROSITE" id="PS00056">
    <property type="entry name" value="RIBOSOMAL_S17"/>
    <property type="match status" value="1"/>
</dbReference>
<feature type="chain" id="PRO_1000143235" description="Small ribosomal subunit protein uS17">
    <location>
        <begin position="1"/>
        <end position="90"/>
    </location>
</feature>
<comment type="function">
    <text evidence="1">One of the primary rRNA binding proteins, it binds specifically to the 5'-end of 16S ribosomal RNA.</text>
</comment>
<comment type="subunit">
    <text evidence="1">Part of the 30S ribosomal subunit.</text>
</comment>
<comment type="similarity">
    <text evidence="1">Belongs to the universal ribosomal protein uS17 family.</text>
</comment>
<gene>
    <name evidence="1" type="primary">rpsQ</name>
    <name type="ordered locus">Bphyt_3635</name>
</gene>
<protein>
    <recommendedName>
        <fullName evidence="1">Small ribosomal subunit protein uS17</fullName>
    </recommendedName>
    <alternativeName>
        <fullName evidence="2">30S ribosomal protein S17</fullName>
    </alternativeName>
</protein>
<reference key="1">
    <citation type="journal article" date="2011" name="J. Bacteriol.">
        <title>Complete genome sequence of the plant growth-promoting endophyte Burkholderia phytofirmans strain PsJN.</title>
        <authorList>
            <person name="Weilharter A."/>
            <person name="Mitter B."/>
            <person name="Shin M.V."/>
            <person name="Chain P.S."/>
            <person name="Nowak J."/>
            <person name="Sessitsch A."/>
        </authorList>
    </citation>
    <scope>NUCLEOTIDE SEQUENCE [LARGE SCALE GENOMIC DNA]</scope>
    <source>
        <strain>DSM 17436 / LMG 22146 / PsJN</strain>
    </source>
</reference>
<accession>B2T742</accession>